<gene>
    <name type="primary">RPS4</name>
</gene>
<reference key="1">
    <citation type="submission" date="1997-07" db="EMBL/GenBank/DDBJ databases">
        <authorList>
            <person name="Naeemuddin M."/>
            <person name="Baysdorfer C."/>
        </authorList>
    </citation>
    <scope>NUCLEOTIDE SEQUENCE [MRNA]</scope>
    <source>
        <strain>cv. B73</strain>
    </source>
</reference>
<name>RS4_MAIZE</name>
<dbReference type="EMBL" id="AF013487">
    <property type="protein sequence ID" value="AAB66899.1"/>
    <property type="molecule type" value="mRNA"/>
</dbReference>
<dbReference type="PIR" id="T01187">
    <property type="entry name" value="T01187"/>
</dbReference>
<dbReference type="RefSeq" id="NP_001266498.1">
    <property type="nucleotide sequence ID" value="NM_001279569.1"/>
</dbReference>
<dbReference type="SMR" id="O22424"/>
<dbReference type="FunCoup" id="O22424">
    <property type="interactions" value="2230"/>
</dbReference>
<dbReference type="STRING" id="4577.O22424"/>
<dbReference type="PaxDb" id="4577-GRMZM2G125271_P01"/>
<dbReference type="EnsemblPlants" id="Zm00001eb211010_T001">
    <property type="protein sequence ID" value="Zm00001eb211010_P001"/>
    <property type="gene ID" value="Zm00001eb211010"/>
</dbReference>
<dbReference type="Gramene" id="Zm00001eb211010_T001">
    <property type="protein sequence ID" value="Zm00001eb211010_P001"/>
    <property type="gene ID" value="Zm00001eb211010"/>
</dbReference>
<dbReference type="eggNOG" id="KOG0378">
    <property type="taxonomic scope" value="Eukaryota"/>
</dbReference>
<dbReference type="HOGENOM" id="CLU_060400_1_0_1"/>
<dbReference type="InParanoid" id="O22424"/>
<dbReference type="OMA" id="VKKICIH"/>
<dbReference type="OrthoDB" id="622770at2759"/>
<dbReference type="Proteomes" id="UP000007305">
    <property type="component" value="Chromosome 5"/>
</dbReference>
<dbReference type="ExpressionAtlas" id="O22424">
    <property type="expression patterns" value="baseline and differential"/>
</dbReference>
<dbReference type="GO" id="GO:0022627">
    <property type="term" value="C:cytosolic small ribosomal subunit"/>
    <property type="evidence" value="ECO:0000318"/>
    <property type="project" value="GO_Central"/>
</dbReference>
<dbReference type="GO" id="GO:0003723">
    <property type="term" value="F:RNA binding"/>
    <property type="evidence" value="ECO:0000318"/>
    <property type="project" value="GO_Central"/>
</dbReference>
<dbReference type="GO" id="GO:0019843">
    <property type="term" value="F:rRNA binding"/>
    <property type="evidence" value="ECO:0007669"/>
    <property type="project" value="UniProtKB-KW"/>
</dbReference>
<dbReference type="GO" id="GO:0003735">
    <property type="term" value="F:structural constituent of ribosome"/>
    <property type="evidence" value="ECO:0000318"/>
    <property type="project" value="GO_Central"/>
</dbReference>
<dbReference type="GO" id="GO:0006412">
    <property type="term" value="P:translation"/>
    <property type="evidence" value="ECO:0000318"/>
    <property type="project" value="GO_Central"/>
</dbReference>
<dbReference type="CDD" id="cd06087">
    <property type="entry name" value="KOW_RPS4"/>
    <property type="match status" value="1"/>
</dbReference>
<dbReference type="CDD" id="cd00165">
    <property type="entry name" value="S4"/>
    <property type="match status" value="1"/>
</dbReference>
<dbReference type="FunFam" id="2.30.30.30:FF:000005">
    <property type="entry name" value="40S ribosomal protein S4"/>
    <property type="match status" value="1"/>
</dbReference>
<dbReference type="FunFam" id="2.40.50.740:FF:000001">
    <property type="entry name" value="40S ribosomal protein S4"/>
    <property type="match status" value="1"/>
</dbReference>
<dbReference type="FunFam" id="3.10.290.10:FF:000002">
    <property type="entry name" value="40S ribosomal protein S4"/>
    <property type="match status" value="1"/>
</dbReference>
<dbReference type="Gene3D" id="2.30.30.30">
    <property type="match status" value="1"/>
</dbReference>
<dbReference type="Gene3D" id="2.40.50.740">
    <property type="match status" value="1"/>
</dbReference>
<dbReference type="Gene3D" id="3.10.290.10">
    <property type="entry name" value="RNA-binding S4 domain"/>
    <property type="match status" value="1"/>
</dbReference>
<dbReference type="HAMAP" id="MF_00485">
    <property type="entry name" value="Ribosomal_eS4"/>
    <property type="match status" value="1"/>
</dbReference>
<dbReference type="InterPro" id="IPR005824">
    <property type="entry name" value="KOW"/>
</dbReference>
<dbReference type="InterPro" id="IPR014722">
    <property type="entry name" value="Rib_uL2_dom2"/>
</dbReference>
<dbReference type="InterPro" id="IPR000876">
    <property type="entry name" value="Ribosomal_eS4"/>
</dbReference>
<dbReference type="InterPro" id="IPR032277">
    <property type="entry name" value="Ribosomal_eS4_C"/>
</dbReference>
<dbReference type="InterPro" id="IPR013845">
    <property type="entry name" value="Ribosomal_eS4_central_region"/>
</dbReference>
<dbReference type="InterPro" id="IPR038237">
    <property type="entry name" value="Ribosomal_eS4_central_sf"/>
</dbReference>
<dbReference type="InterPro" id="IPR041982">
    <property type="entry name" value="Ribosomal_eS4_KOW"/>
</dbReference>
<dbReference type="InterPro" id="IPR013843">
    <property type="entry name" value="Ribosomal_eS4_N"/>
</dbReference>
<dbReference type="InterPro" id="IPR018199">
    <property type="entry name" value="Ribosomal_eS4_N_CS"/>
</dbReference>
<dbReference type="InterPro" id="IPR002942">
    <property type="entry name" value="S4_RNA-bd"/>
</dbReference>
<dbReference type="InterPro" id="IPR036986">
    <property type="entry name" value="S4_RNA-bd_sf"/>
</dbReference>
<dbReference type="NCBIfam" id="NF003312">
    <property type="entry name" value="PRK04313.1"/>
    <property type="match status" value="1"/>
</dbReference>
<dbReference type="PANTHER" id="PTHR11581">
    <property type="entry name" value="30S/40S RIBOSOMAL PROTEIN S4"/>
    <property type="match status" value="1"/>
</dbReference>
<dbReference type="PANTHER" id="PTHR11581:SF40">
    <property type="entry name" value="SMALL RIBOSOMAL SUBUNIT PROTEIN ES4"/>
    <property type="match status" value="1"/>
</dbReference>
<dbReference type="Pfam" id="PF16121">
    <property type="entry name" value="40S_S4_C"/>
    <property type="match status" value="1"/>
</dbReference>
<dbReference type="Pfam" id="PF00467">
    <property type="entry name" value="KOW"/>
    <property type="match status" value="1"/>
</dbReference>
<dbReference type="Pfam" id="PF00900">
    <property type="entry name" value="Ribosomal_S4e"/>
    <property type="match status" value="1"/>
</dbReference>
<dbReference type="Pfam" id="PF08071">
    <property type="entry name" value="RS4NT"/>
    <property type="match status" value="1"/>
</dbReference>
<dbReference type="Pfam" id="PF01479">
    <property type="entry name" value="S4"/>
    <property type="match status" value="1"/>
</dbReference>
<dbReference type="PIRSF" id="PIRSF002116">
    <property type="entry name" value="Ribosomal_S4"/>
    <property type="match status" value="1"/>
</dbReference>
<dbReference type="SMART" id="SM00739">
    <property type="entry name" value="KOW"/>
    <property type="match status" value="1"/>
</dbReference>
<dbReference type="SMART" id="SM00363">
    <property type="entry name" value="S4"/>
    <property type="match status" value="1"/>
</dbReference>
<dbReference type="PROSITE" id="PS00528">
    <property type="entry name" value="RIBOSOMAL_S4E"/>
    <property type="match status" value="1"/>
</dbReference>
<dbReference type="PROSITE" id="PS50889">
    <property type="entry name" value="S4"/>
    <property type="match status" value="1"/>
</dbReference>
<comment type="subcellular location">
    <subcellularLocation>
        <location>Cytoplasm</location>
    </subcellularLocation>
</comment>
<comment type="similarity">
    <text evidence="1">Belongs to the eukaryotic ribosomal protein eS4 family.</text>
</comment>
<feature type="chain" id="PRO_0000130834" description="Small ribosomal subunit protein eS4">
    <location>
        <begin position="1"/>
        <end position="265"/>
    </location>
</feature>
<feature type="domain" description="S4 RNA-binding">
    <location>
        <begin position="42"/>
        <end position="104"/>
    </location>
</feature>
<accession>O22424</accession>
<sequence length="265" mass="30017">MARGLKKHLKRLNAPKHWMLDKLGGAFAPKPSSGPHKSRECLPLILIIRNRLKYALTYREVISILMQRHVLVDGKVRTDKTYPAGFMDVISIPKTNENYRLLYDTKGRFRLHPIRDEDAKFKLCKVRSVQFGQKGIPYLNTYDGRTIRYPDPLIKANDTIKIDLETNKIVDFIKFDVGNVVMVTGGRNTGRVGVIKNREKHKGSFETIHVEDSLGHQFATRMGNVFTIGKGNKPWVSLPKGKGIKLSIIEEQRKRDAAAQAAANA</sequence>
<protein>
    <recommendedName>
        <fullName evidence="1">Small ribosomal subunit protein eS4</fullName>
    </recommendedName>
    <alternativeName>
        <fullName>40S ribosomal protein S4</fullName>
    </alternativeName>
</protein>
<keyword id="KW-0963">Cytoplasm</keyword>
<keyword id="KW-1185">Reference proteome</keyword>
<keyword id="KW-0687">Ribonucleoprotein</keyword>
<keyword id="KW-0689">Ribosomal protein</keyword>
<keyword id="KW-0694">RNA-binding</keyword>
<keyword id="KW-0699">rRNA-binding</keyword>
<proteinExistence type="evidence at transcript level"/>
<organism>
    <name type="scientific">Zea mays</name>
    <name type="common">Maize</name>
    <dbReference type="NCBI Taxonomy" id="4577"/>
    <lineage>
        <taxon>Eukaryota</taxon>
        <taxon>Viridiplantae</taxon>
        <taxon>Streptophyta</taxon>
        <taxon>Embryophyta</taxon>
        <taxon>Tracheophyta</taxon>
        <taxon>Spermatophyta</taxon>
        <taxon>Magnoliopsida</taxon>
        <taxon>Liliopsida</taxon>
        <taxon>Poales</taxon>
        <taxon>Poaceae</taxon>
        <taxon>PACMAD clade</taxon>
        <taxon>Panicoideae</taxon>
        <taxon>Andropogonodae</taxon>
        <taxon>Andropogoneae</taxon>
        <taxon>Tripsacinae</taxon>
        <taxon>Zea</taxon>
    </lineage>
</organism>
<evidence type="ECO:0000305" key="1"/>